<protein>
    <recommendedName>
        <fullName evidence="1">Imidazoleglycerol-phosphate dehydratase</fullName>
        <shortName evidence="1">IGPD</shortName>
        <ecNumber evidence="1">4.2.1.19</ecNumber>
    </recommendedName>
</protein>
<keyword id="KW-0028">Amino-acid biosynthesis</keyword>
<keyword id="KW-0963">Cytoplasm</keyword>
<keyword id="KW-0368">Histidine biosynthesis</keyword>
<keyword id="KW-0456">Lyase</keyword>
<keyword id="KW-1185">Reference proteome</keyword>
<reference key="1">
    <citation type="journal article" date="2006" name="J. Bacteriol.">
        <title>Comparative genomic evidence for a close relationship between the dimorphic prosthecate bacteria Hyphomonas neptunium and Caulobacter crescentus.</title>
        <authorList>
            <person name="Badger J.H."/>
            <person name="Hoover T.R."/>
            <person name="Brun Y.V."/>
            <person name="Weiner R.M."/>
            <person name="Laub M.T."/>
            <person name="Alexandre G."/>
            <person name="Mrazek J."/>
            <person name="Ren Q."/>
            <person name="Paulsen I.T."/>
            <person name="Nelson K.E."/>
            <person name="Khouri H.M."/>
            <person name="Radune D."/>
            <person name="Sosa J."/>
            <person name="Dodson R.J."/>
            <person name="Sullivan S.A."/>
            <person name="Rosovitz M.J."/>
            <person name="Madupu R."/>
            <person name="Brinkac L.M."/>
            <person name="Durkin A.S."/>
            <person name="Daugherty S.C."/>
            <person name="Kothari S.P."/>
            <person name="Giglio M.G."/>
            <person name="Zhou L."/>
            <person name="Haft D.H."/>
            <person name="Selengut J.D."/>
            <person name="Davidsen T.M."/>
            <person name="Yang Q."/>
            <person name="Zafar N."/>
            <person name="Ward N.L."/>
        </authorList>
    </citation>
    <scope>NUCLEOTIDE SEQUENCE [LARGE SCALE GENOMIC DNA]</scope>
    <source>
        <strain>ATCC 15444</strain>
    </source>
</reference>
<name>HIS7_HYPNA</name>
<comment type="catalytic activity">
    <reaction evidence="1">
        <text>D-erythro-1-(imidazol-4-yl)glycerol 3-phosphate = 3-(imidazol-4-yl)-2-oxopropyl phosphate + H2O</text>
        <dbReference type="Rhea" id="RHEA:11040"/>
        <dbReference type="ChEBI" id="CHEBI:15377"/>
        <dbReference type="ChEBI" id="CHEBI:57766"/>
        <dbReference type="ChEBI" id="CHEBI:58278"/>
        <dbReference type="EC" id="4.2.1.19"/>
    </reaction>
</comment>
<comment type="pathway">
    <text evidence="1">Amino-acid biosynthesis; L-histidine biosynthesis; L-histidine from 5-phospho-alpha-D-ribose 1-diphosphate: step 6/9.</text>
</comment>
<comment type="subcellular location">
    <subcellularLocation>
        <location evidence="1">Cytoplasm</location>
    </subcellularLocation>
</comment>
<comment type="similarity">
    <text evidence="1">Belongs to the imidazoleglycerol-phosphate dehydratase family.</text>
</comment>
<dbReference type="EC" id="4.2.1.19" evidence="1"/>
<dbReference type="EMBL" id="CP000158">
    <property type="protein sequence ID" value="ABI78269.1"/>
    <property type="molecule type" value="Genomic_DNA"/>
</dbReference>
<dbReference type="SMR" id="Q0C636"/>
<dbReference type="STRING" id="228405.HNE_0073"/>
<dbReference type="KEGG" id="hne:HNE_0073"/>
<dbReference type="eggNOG" id="COG0131">
    <property type="taxonomic scope" value="Bacteria"/>
</dbReference>
<dbReference type="HOGENOM" id="CLU_044308_3_0_5"/>
<dbReference type="UniPathway" id="UPA00031">
    <property type="reaction ID" value="UER00011"/>
</dbReference>
<dbReference type="Proteomes" id="UP000001959">
    <property type="component" value="Chromosome"/>
</dbReference>
<dbReference type="GO" id="GO:0005737">
    <property type="term" value="C:cytoplasm"/>
    <property type="evidence" value="ECO:0007669"/>
    <property type="project" value="UniProtKB-SubCell"/>
</dbReference>
<dbReference type="GO" id="GO:0004424">
    <property type="term" value="F:imidazoleglycerol-phosphate dehydratase activity"/>
    <property type="evidence" value="ECO:0007669"/>
    <property type="project" value="UniProtKB-UniRule"/>
</dbReference>
<dbReference type="GO" id="GO:0000105">
    <property type="term" value="P:L-histidine biosynthetic process"/>
    <property type="evidence" value="ECO:0007669"/>
    <property type="project" value="UniProtKB-UniRule"/>
</dbReference>
<dbReference type="CDD" id="cd07914">
    <property type="entry name" value="IGPD"/>
    <property type="match status" value="1"/>
</dbReference>
<dbReference type="FunFam" id="3.30.230.40:FF:000001">
    <property type="entry name" value="Imidazoleglycerol-phosphate dehydratase HisB"/>
    <property type="match status" value="1"/>
</dbReference>
<dbReference type="FunFam" id="3.30.230.40:FF:000003">
    <property type="entry name" value="Imidazoleglycerol-phosphate dehydratase HisB"/>
    <property type="match status" value="1"/>
</dbReference>
<dbReference type="Gene3D" id="3.30.230.40">
    <property type="entry name" value="Imidazole glycerol phosphate dehydratase, domain 1"/>
    <property type="match status" value="2"/>
</dbReference>
<dbReference type="HAMAP" id="MF_00076">
    <property type="entry name" value="HisB"/>
    <property type="match status" value="1"/>
</dbReference>
<dbReference type="InterPro" id="IPR038494">
    <property type="entry name" value="IGPD_sf"/>
</dbReference>
<dbReference type="InterPro" id="IPR000807">
    <property type="entry name" value="ImidazoleglycerolP_deHydtase"/>
</dbReference>
<dbReference type="InterPro" id="IPR020565">
    <property type="entry name" value="ImidazoleglycerP_deHydtase_CS"/>
</dbReference>
<dbReference type="InterPro" id="IPR020568">
    <property type="entry name" value="Ribosomal_Su5_D2-typ_SF"/>
</dbReference>
<dbReference type="NCBIfam" id="NF002109">
    <property type="entry name" value="PRK00951.1-5"/>
    <property type="match status" value="1"/>
</dbReference>
<dbReference type="NCBIfam" id="NF002111">
    <property type="entry name" value="PRK00951.2-1"/>
    <property type="match status" value="1"/>
</dbReference>
<dbReference type="NCBIfam" id="NF002114">
    <property type="entry name" value="PRK00951.2-4"/>
    <property type="match status" value="1"/>
</dbReference>
<dbReference type="PANTHER" id="PTHR23133:SF2">
    <property type="entry name" value="IMIDAZOLEGLYCEROL-PHOSPHATE DEHYDRATASE"/>
    <property type="match status" value="1"/>
</dbReference>
<dbReference type="PANTHER" id="PTHR23133">
    <property type="entry name" value="IMIDAZOLEGLYCEROL-PHOSPHATE DEHYDRATASE HIS7"/>
    <property type="match status" value="1"/>
</dbReference>
<dbReference type="Pfam" id="PF00475">
    <property type="entry name" value="IGPD"/>
    <property type="match status" value="1"/>
</dbReference>
<dbReference type="SUPFAM" id="SSF54211">
    <property type="entry name" value="Ribosomal protein S5 domain 2-like"/>
    <property type="match status" value="2"/>
</dbReference>
<dbReference type="PROSITE" id="PS00954">
    <property type="entry name" value="IGP_DEHYDRATASE_1"/>
    <property type="match status" value="1"/>
</dbReference>
<dbReference type="PROSITE" id="PS00955">
    <property type="entry name" value="IGP_DEHYDRATASE_2"/>
    <property type="match status" value="1"/>
</dbReference>
<organism>
    <name type="scientific">Hyphomonas neptunium (strain ATCC 15444)</name>
    <dbReference type="NCBI Taxonomy" id="228405"/>
    <lineage>
        <taxon>Bacteria</taxon>
        <taxon>Pseudomonadati</taxon>
        <taxon>Pseudomonadota</taxon>
        <taxon>Alphaproteobacteria</taxon>
        <taxon>Hyphomonadales</taxon>
        <taxon>Hyphomonadaceae</taxon>
        <taxon>Hyphomonas</taxon>
    </lineage>
</organism>
<evidence type="ECO:0000255" key="1">
    <source>
        <dbReference type="HAMAP-Rule" id="MF_00076"/>
    </source>
</evidence>
<proteinExistence type="inferred from homology"/>
<accession>Q0C636</accession>
<sequence length="208" mass="23124">MRLRQFIWLSMTQTRTADVSRSTKETEISVSVNLDGTGKADIETGIGFFDHMLDSLARHSLIDLKVRCKGDTHIDFHHSVEDTGIVIGQAIAKALGDFGGITRFGHAYIPMDETLTRASVDLCKRPYLIWKVEFRRDKIGEMDTELFKEFFHALAGNGGMCLHVENIYGENNHHIAESCFKATARALRTAITVDPRLGGKPASTKGSL</sequence>
<gene>
    <name evidence="1" type="primary">hisB</name>
    <name type="ordered locus">HNE_0073</name>
</gene>
<feature type="chain" id="PRO_0000336315" description="Imidazoleglycerol-phosphate dehydratase">
    <location>
        <begin position="1"/>
        <end position="208"/>
    </location>
</feature>